<dbReference type="EC" id="2.4.99.28" evidence="1"/>
<dbReference type="EMBL" id="BA000012">
    <property type="protein sequence ID" value="BAB50599.1"/>
    <property type="molecule type" value="Genomic_DNA"/>
</dbReference>
<dbReference type="SMR" id="Q98FG8"/>
<dbReference type="CAZy" id="GT51">
    <property type="family name" value="Glycosyltransferase Family 51"/>
</dbReference>
<dbReference type="KEGG" id="mlo:mll3783"/>
<dbReference type="eggNOG" id="COG0744">
    <property type="taxonomic scope" value="Bacteria"/>
</dbReference>
<dbReference type="HOGENOM" id="CLU_006354_1_1_5"/>
<dbReference type="UniPathway" id="UPA00219"/>
<dbReference type="Proteomes" id="UP000000552">
    <property type="component" value="Chromosome"/>
</dbReference>
<dbReference type="GO" id="GO:0009274">
    <property type="term" value="C:peptidoglycan-based cell wall"/>
    <property type="evidence" value="ECO:0007669"/>
    <property type="project" value="InterPro"/>
</dbReference>
<dbReference type="GO" id="GO:0005886">
    <property type="term" value="C:plasma membrane"/>
    <property type="evidence" value="ECO:0007669"/>
    <property type="project" value="UniProtKB-SubCell"/>
</dbReference>
<dbReference type="GO" id="GO:0016763">
    <property type="term" value="F:pentosyltransferase activity"/>
    <property type="evidence" value="ECO:0007669"/>
    <property type="project" value="InterPro"/>
</dbReference>
<dbReference type="GO" id="GO:0008955">
    <property type="term" value="F:peptidoglycan glycosyltransferase activity"/>
    <property type="evidence" value="ECO:0007669"/>
    <property type="project" value="UniProtKB-UniRule"/>
</dbReference>
<dbReference type="GO" id="GO:0071555">
    <property type="term" value="P:cell wall organization"/>
    <property type="evidence" value="ECO:0007669"/>
    <property type="project" value="UniProtKB-KW"/>
</dbReference>
<dbReference type="GO" id="GO:0009252">
    <property type="term" value="P:peptidoglycan biosynthetic process"/>
    <property type="evidence" value="ECO:0007669"/>
    <property type="project" value="UniProtKB-UniRule"/>
</dbReference>
<dbReference type="GO" id="GO:0008360">
    <property type="term" value="P:regulation of cell shape"/>
    <property type="evidence" value="ECO:0007669"/>
    <property type="project" value="UniProtKB-KW"/>
</dbReference>
<dbReference type="Gene3D" id="1.10.3810.10">
    <property type="entry name" value="Biosynthetic peptidoglycan transglycosylase-like"/>
    <property type="match status" value="1"/>
</dbReference>
<dbReference type="HAMAP" id="MF_00766">
    <property type="entry name" value="PGT_MtgA"/>
    <property type="match status" value="1"/>
</dbReference>
<dbReference type="InterPro" id="IPR001264">
    <property type="entry name" value="Glyco_trans_51"/>
</dbReference>
<dbReference type="InterPro" id="IPR023346">
    <property type="entry name" value="Lysozyme-like_dom_sf"/>
</dbReference>
<dbReference type="InterPro" id="IPR036950">
    <property type="entry name" value="PBP_transglycosylase"/>
</dbReference>
<dbReference type="InterPro" id="IPR011812">
    <property type="entry name" value="Pep_trsgly"/>
</dbReference>
<dbReference type="PANTHER" id="PTHR30400:SF0">
    <property type="entry name" value="BIOSYNTHETIC PEPTIDOGLYCAN TRANSGLYCOSYLASE"/>
    <property type="match status" value="1"/>
</dbReference>
<dbReference type="PANTHER" id="PTHR30400">
    <property type="entry name" value="MONOFUNCTIONAL BIOSYNTHETIC PEPTIDOGLYCAN TRANSGLYCOSYLASE"/>
    <property type="match status" value="1"/>
</dbReference>
<dbReference type="Pfam" id="PF00912">
    <property type="entry name" value="Transgly"/>
    <property type="match status" value="1"/>
</dbReference>
<dbReference type="SUPFAM" id="SSF53955">
    <property type="entry name" value="Lysozyme-like"/>
    <property type="match status" value="1"/>
</dbReference>
<protein>
    <recommendedName>
        <fullName evidence="1">Biosynthetic peptidoglycan transglycosylase</fullName>
        <ecNumber evidence="1">2.4.99.28</ecNumber>
    </recommendedName>
    <alternativeName>
        <fullName evidence="1">Glycan polymerase</fullName>
    </alternativeName>
    <alternativeName>
        <fullName evidence="1">Peptidoglycan glycosyltransferase MtgA</fullName>
        <shortName evidence="1">PGT</shortName>
    </alternativeName>
</protein>
<feature type="chain" id="PRO_0000083141" description="Biosynthetic peptidoglycan transglycosylase">
    <location>
        <begin position="1"/>
        <end position="236"/>
    </location>
</feature>
<feature type="transmembrane region" description="Helical" evidence="1">
    <location>
        <begin position="20"/>
        <end position="40"/>
    </location>
</feature>
<reference key="1">
    <citation type="journal article" date="2000" name="DNA Res.">
        <title>Complete genome structure of the nitrogen-fixing symbiotic bacterium Mesorhizobium loti.</title>
        <authorList>
            <person name="Kaneko T."/>
            <person name="Nakamura Y."/>
            <person name="Sato S."/>
            <person name="Asamizu E."/>
            <person name="Kato T."/>
            <person name="Sasamoto S."/>
            <person name="Watanabe A."/>
            <person name="Idesawa K."/>
            <person name="Ishikawa A."/>
            <person name="Kawashima K."/>
            <person name="Kimura T."/>
            <person name="Kishida Y."/>
            <person name="Kiyokawa C."/>
            <person name="Kohara M."/>
            <person name="Matsumoto M."/>
            <person name="Matsuno A."/>
            <person name="Mochizuki Y."/>
            <person name="Nakayama S."/>
            <person name="Nakazaki N."/>
            <person name="Shimpo S."/>
            <person name="Sugimoto M."/>
            <person name="Takeuchi C."/>
            <person name="Yamada M."/>
            <person name="Tabata S."/>
        </authorList>
    </citation>
    <scope>NUCLEOTIDE SEQUENCE [LARGE SCALE GENOMIC DNA]</scope>
    <source>
        <strain>LMG 29417 / CECT 9101 / MAFF 303099</strain>
    </source>
</reference>
<sequence length="236" mass="26043">MATRSRGVNRRSLRRWVRRGLVVAAVLALIPTMLTFLYLPSFVHPVSTLMLKDLATFSGYDRRWVSIDDVAPVLAHSVIMSEDGQFCFHRGVDLGELRGVVDDALAGEATRGASTITMQTVKNLFLWSRPLGSVRKVVELPLAVFFDAVMSKRRIMEIYLNIAEWGPGIYGIEAAAQHHFGIPAKQLSRRQAALLAVTLPNPIARNPAKPGPGLRRLANLIERRAGRSGAYVGCLE</sequence>
<name>MTGA_RHILO</name>
<gene>
    <name evidence="1" type="primary">mtgA</name>
    <name type="ordered locus">mll3783</name>
</gene>
<accession>Q98FG8</accession>
<proteinExistence type="inferred from homology"/>
<evidence type="ECO:0000255" key="1">
    <source>
        <dbReference type="HAMAP-Rule" id="MF_00766"/>
    </source>
</evidence>
<organism>
    <name type="scientific">Mesorhizobium japonicum (strain LMG 29417 / CECT 9101 / MAFF 303099)</name>
    <name type="common">Mesorhizobium loti (strain MAFF 303099)</name>
    <dbReference type="NCBI Taxonomy" id="266835"/>
    <lineage>
        <taxon>Bacteria</taxon>
        <taxon>Pseudomonadati</taxon>
        <taxon>Pseudomonadota</taxon>
        <taxon>Alphaproteobacteria</taxon>
        <taxon>Hyphomicrobiales</taxon>
        <taxon>Phyllobacteriaceae</taxon>
        <taxon>Mesorhizobium</taxon>
    </lineage>
</organism>
<keyword id="KW-0997">Cell inner membrane</keyword>
<keyword id="KW-1003">Cell membrane</keyword>
<keyword id="KW-0133">Cell shape</keyword>
<keyword id="KW-0961">Cell wall biogenesis/degradation</keyword>
<keyword id="KW-0328">Glycosyltransferase</keyword>
<keyword id="KW-0472">Membrane</keyword>
<keyword id="KW-0573">Peptidoglycan synthesis</keyword>
<keyword id="KW-0808">Transferase</keyword>
<keyword id="KW-0812">Transmembrane</keyword>
<keyword id="KW-1133">Transmembrane helix</keyword>
<comment type="function">
    <text evidence="1">Peptidoglycan polymerase that catalyzes glycan chain elongation from lipid-linked precursors.</text>
</comment>
<comment type="catalytic activity">
    <reaction evidence="1">
        <text>[GlcNAc-(1-&gt;4)-Mur2Ac(oyl-L-Ala-gamma-D-Glu-L-Lys-D-Ala-D-Ala)](n)-di-trans,octa-cis-undecaprenyl diphosphate + beta-D-GlcNAc-(1-&gt;4)-Mur2Ac(oyl-L-Ala-gamma-D-Glu-L-Lys-D-Ala-D-Ala)-di-trans,octa-cis-undecaprenyl diphosphate = [GlcNAc-(1-&gt;4)-Mur2Ac(oyl-L-Ala-gamma-D-Glu-L-Lys-D-Ala-D-Ala)](n+1)-di-trans,octa-cis-undecaprenyl diphosphate + di-trans,octa-cis-undecaprenyl diphosphate + H(+)</text>
        <dbReference type="Rhea" id="RHEA:23708"/>
        <dbReference type="Rhea" id="RHEA-COMP:9602"/>
        <dbReference type="Rhea" id="RHEA-COMP:9603"/>
        <dbReference type="ChEBI" id="CHEBI:15378"/>
        <dbReference type="ChEBI" id="CHEBI:58405"/>
        <dbReference type="ChEBI" id="CHEBI:60033"/>
        <dbReference type="ChEBI" id="CHEBI:78435"/>
        <dbReference type="EC" id="2.4.99.28"/>
    </reaction>
</comment>
<comment type="pathway">
    <text evidence="1">Cell wall biogenesis; peptidoglycan biosynthesis.</text>
</comment>
<comment type="subcellular location">
    <subcellularLocation>
        <location evidence="1">Cell inner membrane</location>
        <topology evidence="1">Single-pass membrane protein</topology>
    </subcellularLocation>
</comment>
<comment type="similarity">
    <text evidence="1">Belongs to the glycosyltransferase 51 family.</text>
</comment>